<proteinExistence type="evidence at protein level"/>
<feature type="chain" id="PRO_0000054707" description="7alpha-hydroxysteroid dehydrogenase">
    <location>
        <begin position="1"/>
        <end position="267"/>
    </location>
</feature>
<feature type="active site" description="Proton acceptor" evidence="2">
    <location>
        <position position="158"/>
    </location>
</feature>
<feature type="binding site" evidence="1">
    <location>
        <begin position="13"/>
        <end position="18"/>
    </location>
    <ligand>
        <name>NADP(+)</name>
        <dbReference type="ChEBI" id="CHEBI:58349"/>
    </ligand>
</feature>
<feature type="binding site" evidence="1">
    <location>
        <position position="38"/>
    </location>
    <ligand>
        <name>NADP(+)</name>
        <dbReference type="ChEBI" id="CHEBI:58349"/>
    </ligand>
</feature>
<feature type="binding site" evidence="1">
    <location>
        <begin position="63"/>
        <end position="64"/>
    </location>
    <ligand>
        <name>NADP(+)</name>
        <dbReference type="ChEBI" id="CHEBI:58349"/>
    </ligand>
</feature>
<feature type="binding site" evidence="1">
    <location>
        <position position="90"/>
    </location>
    <ligand>
        <name>NADP(+)</name>
        <dbReference type="ChEBI" id="CHEBI:58349"/>
    </ligand>
</feature>
<feature type="binding site" evidence="1 6">
    <location>
        <position position="145"/>
    </location>
    <ligand>
        <name>cholate</name>
        <dbReference type="ChEBI" id="CHEBI:29747"/>
    </ligand>
</feature>
<feature type="binding site" evidence="1 6">
    <location>
        <position position="158"/>
    </location>
    <ligand>
        <name>cholate</name>
        <dbReference type="ChEBI" id="CHEBI:29747"/>
    </ligand>
</feature>
<feature type="binding site" evidence="1">
    <location>
        <position position="158"/>
    </location>
    <ligand>
        <name>NADP(+)</name>
        <dbReference type="ChEBI" id="CHEBI:58349"/>
    </ligand>
</feature>
<feature type="binding site" evidence="1">
    <location>
        <position position="162"/>
    </location>
    <ligand>
        <name>NADP(+)</name>
        <dbReference type="ChEBI" id="CHEBI:58349"/>
    </ligand>
</feature>
<feature type="binding site" evidence="1">
    <location>
        <begin position="191"/>
        <end position="195"/>
    </location>
    <ligand>
        <name>NADP(+)</name>
        <dbReference type="ChEBI" id="CHEBI:58349"/>
    </ligand>
</feature>
<feature type="site" description="Transition state stabilizer" evidence="2">
    <location>
        <position position="145"/>
    </location>
</feature>
<feature type="site" description="Lowers pKa of active site Tyr" evidence="2">
    <location>
        <position position="162"/>
    </location>
</feature>
<evidence type="ECO:0000250" key="1">
    <source>
        <dbReference type="UniProtKB" id="G9FRD7"/>
    </source>
</evidence>
<evidence type="ECO:0000250" key="2">
    <source>
        <dbReference type="UniProtKB" id="P0AET8"/>
    </source>
</evidence>
<evidence type="ECO:0000269" key="3">
    <source>
    </source>
</evidence>
<evidence type="ECO:0000269" key="4">
    <source>
    </source>
</evidence>
<evidence type="ECO:0000303" key="5">
    <source>
    </source>
</evidence>
<evidence type="ECO:0000305" key="6"/>
<evidence type="ECO:0000305" key="7">
    <source>
    </source>
</evidence>
<evidence type="ECO:0000305" key="8">
    <source>
    </source>
</evidence>
<dbReference type="EC" id="1.1.1.-" evidence="4 7"/>
<dbReference type="EMBL" id="L12058">
    <property type="protein sequence ID" value="AAA53556.1"/>
    <property type="molecule type" value="Genomic_DNA"/>
</dbReference>
<dbReference type="PIR" id="B55850">
    <property type="entry name" value="B55850"/>
</dbReference>
<dbReference type="SMR" id="P50200"/>
<dbReference type="SwissLipids" id="SLP:000001735"/>
<dbReference type="eggNOG" id="COG1028">
    <property type="taxonomic scope" value="Bacteria"/>
</dbReference>
<dbReference type="GO" id="GO:0016491">
    <property type="term" value="F:oxidoreductase activity"/>
    <property type="evidence" value="ECO:0007669"/>
    <property type="project" value="UniProtKB-KW"/>
</dbReference>
<dbReference type="GO" id="GO:0030573">
    <property type="term" value="P:bile acid catabolic process"/>
    <property type="evidence" value="ECO:0007669"/>
    <property type="project" value="UniProtKB-KW"/>
</dbReference>
<dbReference type="GO" id="GO:0016042">
    <property type="term" value="P:lipid catabolic process"/>
    <property type="evidence" value="ECO:0007669"/>
    <property type="project" value="UniProtKB-KW"/>
</dbReference>
<dbReference type="CDD" id="cd05233">
    <property type="entry name" value="SDR_c"/>
    <property type="match status" value="1"/>
</dbReference>
<dbReference type="FunFam" id="3.40.50.720:FF:000084">
    <property type="entry name" value="Short-chain dehydrogenase reductase"/>
    <property type="match status" value="1"/>
</dbReference>
<dbReference type="Gene3D" id="3.40.50.720">
    <property type="entry name" value="NAD(P)-binding Rossmann-like Domain"/>
    <property type="match status" value="1"/>
</dbReference>
<dbReference type="InterPro" id="IPR036291">
    <property type="entry name" value="NAD(P)-bd_dom_sf"/>
</dbReference>
<dbReference type="InterPro" id="IPR020904">
    <property type="entry name" value="Sc_DH/Rdtase_CS"/>
</dbReference>
<dbReference type="InterPro" id="IPR050259">
    <property type="entry name" value="SDR"/>
</dbReference>
<dbReference type="InterPro" id="IPR002347">
    <property type="entry name" value="SDR_fam"/>
</dbReference>
<dbReference type="PANTHER" id="PTHR42879">
    <property type="entry name" value="3-OXOACYL-(ACYL-CARRIER-PROTEIN) REDUCTASE"/>
    <property type="match status" value="1"/>
</dbReference>
<dbReference type="PANTHER" id="PTHR42879:SF2">
    <property type="entry name" value="3-OXOACYL-[ACYL-CARRIER-PROTEIN] REDUCTASE FABG"/>
    <property type="match status" value="1"/>
</dbReference>
<dbReference type="Pfam" id="PF13561">
    <property type="entry name" value="adh_short_C2"/>
    <property type="match status" value="1"/>
</dbReference>
<dbReference type="PRINTS" id="PR00081">
    <property type="entry name" value="GDHRDH"/>
</dbReference>
<dbReference type="PRINTS" id="PR00080">
    <property type="entry name" value="SDRFAMILY"/>
</dbReference>
<dbReference type="SUPFAM" id="SSF51735">
    <property type="entry name" value="NAD(P)-binding Rossmann-fold domains"/>
    <property type="match status" value="1"/>
</dbReference>
<dbReference type="PROSITE" id="PS00061">
    <property type="entry name" value="ADH_SHORT"/>
    <property type="match status" value="1"/>
</dbReference>
<protein>
    <recommendedName>
        <fullName evidence="5">7alpha-hydroxysteroid dehydrogenase</fullName>
        <shortName evidence="5">7alpha-HSDH</shortName>
        <ecNumber evidence="4 7">1.1.1.-</ecNumber>
    </recommendedName>
    <alternativeName>
        <fullName evidence="8">NADP-dependent 7alpha-hydroxysteroid dehydrogenase</fullName>
    </alternativeName>
</protein>
<organism>
    <name type="scientific">Paraclostridium sordellii</name>
    <name type="common">Clostridium sordellii</name>
    <dbReference type="NCBI Taxonomy" id="1505"/>
    <lineage>
        <taxon>Bacteria</taxon>
        <taxon>Bacillati</taxon>
        <taxon>Bacillota</taxon>
        <taxon>Clostridia</taxon>
        <taxon>Peptostreptococcales</taxon>
        <taxon>Peptostreptococcaceae</taxon>
        <taxon>Paraclostridium</taxon>
    </lineage>
</organism>
<comment type="function">
    <text evidence="3 4">7alpha-hydroxysteroid dehydrogenase that catalyzes the NADP(+)-dependent oxidation of the 7alpha-hydroxy group of 7alpha-hydroxysteroids, such as the major human bile acids cholate and chenodeoxycholate, to the corresponding 7-oxosteroids (PubMed:11947357, PubMed:8050999). Is thus liley involved in the metabolism of primary bile acids (PubMed:8050999).</text>
</comment>
<comment type="catalytic activity">
    <reaction evidence="7">
        <text>cholate + NADP(+) = 3alpha,12alpha-dihydroxy-7-oxo-5beta-cholanate + NADPH + H(+)</text>
        <dbReference type="Rhea" id="RHEA:48508"/>
        <dbReference type="ChEBI" id="CHEBI:11893"/>
        <dbReference type="ChEBI" id="CHEBI:15378"/>
        <dbReference type="ChEBI" id="CHEBI:29747"/>
        <dbReference type="ChEBI" id="CHEBI:57783"/>
        <dbReference type="ChEBI" id="CHEBI:58349"/>
    </reaction>
    <physiologicalReaction direction="left-to-right" evidence="7">
        <dbReference type="Rhea" id="RHEA:48509"/>
    </physiologicalReaction>
</comment>
<comment type="catalytic activity">
    <reaction evidence="4">
        <text>chenodeoxycholate + NADP(+) = 7-oxolithocholate + NADPH + H(+)</text>
        <dbReference type="Rhea" id="RHEA:53820"/>
        <dbReference type="ChEBI" id="CHEBI:15378"/>
        <dbReference type="ChEBI" id="CHEBI:36234"/>
        <dbReference type="ChEBI" id="CHEBI:57783"/>
        <dbReference type="ChEBI" id="CHEBI:58349"/>
        <dbReference type="ChEBI" id="CHEBI:78605"/>
    </reaction>
    <physiologicalReaction direction="left-to-right" evidence="4">
        <dbReference type="Rhea" id="RHEA:53821"/>
    </physiologicalReaction>
</comment>
<comment type="subunit">
    <text evidence="4">Homotetramer.</text>
</comment>
<comment type="induction">
    <text evidence="4">Up-regulated by bile acids, such as cholate and chenodeoxycholate. Maximally expressed during the early stationary phase of growth.</text>
</comment>
<comment type="similarity">
    <text evidence="6">Belongs to the short-chain dehydrogenases/reductases (SDR) family.</text>
</comment>
<sequence>MNKLENKVALVTSATRGIGLASAIKLAQNGAIVYMGVRRLEATQEICDKYKEEGLILKPVFFDAYNIDIYKEMIDTIIKNEGKIDILVNNFGTGRPEKDLDLVNGDEDTFFELFNYNVGSVYRLSKLIIPHMIENKGGSIVNISSVGGSIPDISRIGYGVSKSGVNNITKQIAIQYAKYGIRCNAVLPGLIATDAAMNSMPDEFRKSFLSHVPLNRIGNPEDIANSVLFFVPSEDSSYITGSILEVSGGYNLGTPQYAEFVGSKVVE</sequence>
<keyword id="KW-0088">Bile acid catabolism</keyword>
<keyword id="KW-0903">Direct protein sequencing</keyword>
<keyword id="KW-0442">Lipid degradation</keyword>
<keyword id="KW-0443">Lipid metabolism</keyword>
<keyword id="KW-0521">NADP</keyword>
<keyword id="KW-0560">Oxidoreductase</keyword>
<keyword id="KW-0753">Steroid metabolism</keyword>
<name>HDHA_PARSO</name>
<reference key="1">
    <citation type="journal article" date="1994" name="J. Bacteriol.">
        <title>Characterization and regulation of the NADP-linked 7 alpha-hydroxysteroid dehydrogenase gene from Clostridium sordellii.</title>
        <authorList>
            <person name="Coleman J.P."/>
            <person name="Hudson L.L."/>
            <person name="Adams M.J."/>
        </authorList>
    </citation>
    <scope>NUCLEOTIDE SEQUENCE [GENOMIC DNA]</scope>
    <scope>PROTEIN SEQUENCE OF 1-18</scope>
    <scope>FUNCTION</scope>
    <scope>CATALYTIC ACTIVITY</scope>
    <scope>INDUCTION</scope>
    <scope>SUBUNIT</scope>
    <source>
        <strain>ATCC 9714 / DSM 2141 / CCUG 9284 / JCM 3814 / LMG 15708 / NCIMB 10717 / 211</strain>
    </source>
</reference>
<reference key="2">
    <citation type="journal article" date="1970" name="FEBS Lett.">
        <title>7alpha-dehydroxylation of cholic acid by Clostridium bifermentans strain ATCC 9714 and Clostridium sordellii strain NCIB 6929.</title>
        <authorList>
            <person name="Hayakawa S."/>
            <person name="Hattori T."/>
        </authorList>
    </citation>
    <scope>FUNCTION</scope>
    <scope>CATALYTIC ACTIVITY</scope>
    <source>
        <strain>ATCC 9714 / DSM 2141 / CCUG 9284 / JCM 3814 / LMG 15708 / NCIMB 10717 / 211</strain>
    </source>
</reference>
<accession>P50200</accession>